<name>TORD_SHEB8</name>
<feature type="chain" id="PRO_1000065505" description="Chaperone protein TorD">
    <location>
        <begin position="1"/>
        <end position="209"/>
    </location>
</feature>
<keyword id="KW-0143">Chaperone</keyword>
<keyword id="KW-0963">Cytoplasm</keyword>
<protein>
    <recommendedName>
        <fullName evidence="1">Chaperone protein TorD</fullName>
    </recommendedName>
</protein>
<evidence type="ECO:0000255" key="1">
    <source>
        <dbReference type="HAMAP-Rule" id="MF_01150"/>
    </source>
</evidence>
<reference key="1">
    <citation type="submission" date="2007-07" db="EMBL/GenBank/DDBJ databases">
        <title>Complete sequence of chromosome of Shewanella baltica OS185.</title>
        <authorList>
            <consortium name="US DOE Joint Genome Institute"/>
            <person name="Copeland A."/>
            <person name="Lucas S."/>
            <person name="Lapidus A."/>
            <person name="Barry K."/>
            <person name="Glavina del Rio T."/>
            <person name="Dalin E."/>
            <person name="Tice H."/>
            <person name="Pitluck S."/>
            <person name="Sims D."/>
            <person name="Brettin T."/>
            <person name="Bruce D."/>
            <person name="Detter J.C."/>
            <person name="Han C."/>
            <person name="Schmutz J."/>
            <person name="Larimer F."/>
            <person name="Land M."/>
            <person name="Hauser L."/>
            <person name="Kyrpides N."/>
            <person name="Mikhailova N."/>
            <person name="Brettar I."/>
            <person name="Rodrigues J."/>
            <person name="Konstantinidis K."/>
            <person name="Tiedje J."/>
            <person name="Richardson P."/>
        </authorList>
    </citation>
    <scope>NUCLEOTIDE SEQUENCE [LARGE SCALE GENOMIC DNA]</scope>
    <source>
        <strain>OS185</strain>
    </source>
</reference>
<comment type="function">
    <text evidence="1">Involved in the biogenesis of TorA. Acts on TorA before the insertion of the molybdenum cofactor and, as a result, probably favors a conformation of the apoenzyme that is competent for acquiring the cofactor.</text>
</comment>
<comment type="subcellular location">
    <subcellularLocation>
        <location evidence="1">Cytoplasm</location>
    </subcellularLocation>
</comment>
<comment type="similarity">
    <text evidence="1">Belongs to the TorD/DmsD family. TorD subfamily.</text>
</comment>
<gene>
    <name evidence="1" type="primary">torD</name>
    <name type="ordered locus">Shew185_3214</name>
</gene>
<sequence length="209" mass="23494">MSQVDINHARALVYQLLSSLFAREVDEQRLKELTSEAAQQFWEQLSLEAKLTQSVDKIRSTLNGIKDDETLLELAADYCGLFLVGTKHSASPYASLYLSGEDEPLLFGQQHQQMSEFLHQSKLQVQSHFPEPADHLAVMLAYMAHLCCHSEDSVQLSFLQTCVDSWLAKFINQLTQCDKNGFYSAVAILTLAWVKQDIAQLEPAEAVIS</sequence>
<organism>
    <name type="scientific">Shewanella baltica (strain OS185)</name>
    <dbReference type="NCBI Taxonomy" id="402882"/>
    <lineage>
        <taxon>Bacteria</taxon>
        <taxon>Pseudomonadati</taxon>
        <taxon>Pseudomonadota</taxon>
        <taxon>Gammaproteobacteria</taxon>
        <taxon>Alteromonadales</taxon>
        <taxon>Shewanellaceae</taxon>
        <taxon>Shewanella</taxon>
    </lineage>
</organism>
<dbReference type="EMBL" id="CP000753">
    <property type="protein sequence ID" value="ABS09342.1"/>
    <property type="molecule type" value="Genomic_DNA"/>
</dbReference>
<dbReference type="RefSeq" id="WP_012089869.1">
    <property type="nucleotide sequence ID" value="NC_009665.1"/>
</dbReference>
<dbReference type="SMR" id="A6WRA3"/>
<dbReference type="KEGG" id="sbm:Shew185_3214"/>
<dbReference type="HOGENOM" id="CLU_077650_4_0_6"/>
<dbReference type="GO" id="GO:0005737">
    <property type="term" value="C:cytoplasm"/>
    <property type="evidence" value="ECO:0007669"/>
    <property type="project" value="UniProtKB-SubCell"/>
</dbReference>
<dbReference type="GO" id="GO:0051259">
    <property type="term" value="P:protein complex oligomerization"/>
    <property type="evidence" value="ECO:0007669"/>
    <property type="project" value="InterPro"/>
</dbReference>
<dbReference type="GO" id="GO:0006457">
    <property type="term" value="P:protein folding"/>
    <property type="evidence" value="ECO:0007669"/>
    <property type="project" value="UniProtKB-UniRule"/>
</dbReference>
<dbReference type="Gene3D" id="1.20.120.1820">
    <property type="match status" value="1"/>
</dbReference>
<dbReference type="Gene3D" id="1.20.1280.20">
    <property type="entry name" value="HscB, C-terminal domain"/>
    <property type="match status" value="1"/>
</dbReference>
<dbReference type="HAMAP" id="MF_01150">
    <property type="entry name" value="TorD"/>
    <property type="match status" value="1"/>
</dbReference>
<dbReference type="InterPro" id="IPR023069">
    <property type="entry name" value="Chaperone_TorD"/>
</dbReference>
<dbReference type="InterPro" id="IPR020945">
    <property type="entry name" value="DMSO/NO3_reduct_chaperone"/>
</dbReference>
<dbReference type="InterPro" id="IPR036386">
    <property type="entry name" value="HscB_C_sf"/>
</dbReference>
<dbReference type="InterPro" id="IPR036411">
    <property type="entry name" value="TorD-like_sf"/>
</dbReference>
<dbReference type="InterPro" id="IPR050289">
    <property type="entry name" value="TorD/DmsD_chaperones"/>
</dbReference>
<dbReference type="NCBIfam" id="NF003442">
    <property type="entry name" value="PRK04976.1"/>
    <property type="match status" value="1"/>
</dbReference>
<dbReference type="PANTHER" id="PTHR34227:SF11">
    <property type="entry name" value="CHAPERONE PROTEIN TORD"/>
    <property type="match status" value="1"/>
</dbReference>
<dbReference type="PANTHER" id="PTHR34227">
    <property type="entry name" value="CHAPERONE PROTEIN YCDY"/>
    <property type="match status" value="1"/>
</dbReference>
<dbReference type="Pfam" id="PF02613">
    <property type="entry name" value="Nitrate_red_del"/>
    <property type="match status" value="1"/>
</dbReference>
<dbReference type="SUPFAM" id="SSF89155">
    <property type="entry name" value="TorD-like"/>
    <property type="match status" value="1"/>
</dbReference>
<proteinExistence type="inferred from homology"/>
<accession>A6WRA3</accession>